<comment type="function">
    <text evidence="1">Catalyzes the conversion of 3-deoxy-D-arabino-heptulosonate 7-phosphate (DAHP) to dehydroquinate (DHQ).</text>
</comment>
<comment type="catalytic activity">
    <reaction evidence="1">
        <text>7-phospho-2-dehydro-3-deoxy-D-arabino-heptonate = 3-dehydroquinate + phosphate</text>
        <dbReference type="Rhea" id="RHEA:21968"/>
        <dbReference type="ChEBI" id="CHEBI:32364"/>
        <dbReference type="ChEBI" id="CHEBI:43474"/>
        <dbReference type="ChEBI" id="CHEBI:58394"/>
        <dbReference type="EC" id="4.2.3.4"/>
    </reaction>
</comment>
<comment type="cofactor">
    <cofactor evidence="1">
        <name>NAD(+)</name>
        <dbReference type="ChEBI" id="CHEBI:57540"/>
    </cofactor>
</comment>
<comment type="cofactor">
    <cofactor evidence="1">
        <name>Co(2+)</name>
        <dbReference type="ChEBI" id="CHEBI:48828"/>
    </cofactor>
    <cofactor evidence="1">
        <name>Zn(2+)</name>
        <dbReference type="ChEBI" id="CHEBI:29105"/>
    </cofactor>
    <text evidence="1">Binds 1 divalent metal cation per subunit. Can use either Co(2+) or Zn(2+).</text>
</comment>
<comment type="pathway">
    <text evidence="1">Metabolic intermediate biosynthesis; chorismate biosynthesis; chorismate from D-erythrose 4-phosphate and phosphoenolpyruvate: step 2/7.</text>
</comment>
<comment type="subcellular location">
    <subcellularLocation>
        <location evidence="1">Cytoplasm</location>
    </subcellularLocation>
</comment>
<comment type="similarity">
    <text evidence="1">Belongs to the sugar phosphate cyclases superfamily. Dehydroquinate synthase family.</text>
</comment>
<proteinExistence type="inferred from homology"/>
<protein>
    <recommendedName>
        <fullName evidence="1">3-dehydroquinate synthase</fullName>
        <shortName evidence="1">DHQS</shortName>
        <ecNumber evidence="1">4.2.3.4</ecNumber>
    </recommendedName>
</protein>
<organism>
    <name type="scientific">Xylella fastidiosa (strain Temecula1 / ATCC 700964)</name>
    <dbReference type="NCBI Taxonomy" id="183190"/>
    <lineage>
        <taxon>Bacteria</taxon>
        <taxon>Pseudomonadati</taxon>
        <taxon>Pseudomonadota</taxon>
        <taxon>Gammaproteobacteria</taxon>
        <taxon>Lysobacterales</taxon>
        <taxon>Lysobacteraceae</taxon>
        <taxon>Xylella</taxon>
    </lineage>
</organism>
<accession>Q87DU9</accession>
<evidence type="ECO:0000255" key="1">
    <source>
        <dbReference type="HAMAP-Rule" id="MF_00110"/>
    </source>
</evidence>
<sequence>MTTPTPLRSVTVNTPPPYTIAIGPGLLHDPPRLAATIRGRHALILSDSEVAPRYAAQLHETLLRARPDLHLNVFTLPAGETSKSLENFGAAIAQLATLGATRDACLFALGGGVIGDLAGFTAACWMRGIDYVQVPTTLLAMVDSSVGGKTAVDIPQGKNMVGAFHPPRAVIADTDTLATLPLRELRAGLSEVIKYGAIRDPVFFHWLQTTREALLARDPAALAQAIARSCEHKADIVGRDPLEKGERVLLNLGHTFGHAIETTQGYSTPGSNNLNHGEAVAVGMVLAARLSNTLGLAPAEDTETLKNLLDAYGLPTVLPSGLTPEMLLERMRLDKKNIAGRLRLVLWRGIGHAEAVPDVDEAAVRQILAN</sequence>
<dbReference type="EC" id="4.2.3.4" evidence="1"/>
<dbReference type="EMBL" id="AE009442">
    <property type="protein sequence ID" value="AAO28454.1"/>
    <property type="molecule type" value="Genomic_DNA"/>
</dbReference>
<dbReference type="RefSeq" id="WP_011097704.1">
    <property type="nucleotide sequence ID" value="NC_004556.1"/>
</dbReference>
<dbReference type="SMR" id="Q87DU9"/>
<dbReference type="GeneID" id="93904296"/>
<dbReference type="KEGG" id="xft:PD_0581"/>
<dbReference type="HOGENOM" id="CLU_001201_0_2_6"/>
<dbReference type="UniPathway" id="UPA00053">
    <property type="reaction ID" value="UER00085"/>
</dbReference>
<dbReference type="Proteomes" id="UP000002516">
    <property type="component" value="Chromosome"/>
</dbReference>
<dbReference type="GO" id="GO:0005737">
    <property type="term" value="C:cytoplasm"/>
    <property type="evidence" value="ECO:0007669"/>
    <property type="project" value="UniProtKB-SubCell"/>
</dbReference>
<dbReference type="GO" id="GO:0003856">
    <property type="term" value="F:3-dehydroquinate synthase activity"/>
    <property type="evidence" value="ECO:0007669"/>
    <property type="project" value="UniProtKB-UniRule"/>
</dbReference>
<dbReference type="GO" id="GO:0046872">
    <property type="term" value="F:metal ion binding"/>
    <property type="evidence" value="ECO:0007669"/>
    <property type="project" value="UniProtKB-KW"/>
</dbReference>
<dbReference type="GO" id="GO:0000166">
    <property type="term" value="F:nucleotide binding"/>
    <property type="evidence" value="ECO:0007669"/>
    <property type="project" value="UniProtKB-KW"/>
</dbReference>
<dbReference type="GO" id="GO:0008652">
    <property type="term" value="P:amino acid biosynthetic process"/>
    <property type="evidence" value="ECO:0007669"/>
    <property type="project" value="UniProtKB-KW"/>
</dbReference>
<dbReference type="GO" id="GO:0009073">
    <property type="term" value="P:aromatic amino acid family biosynthetic process"/>
    <property type="evidence" value="ECO:0007669"/>
    <property type="project" value="UniProtKB-KW"/>
</dbReference>
<dbReference type="GO" id="GO:0009423">
    <property type="term" value="P:chorismate biosynthetic process"/>
    <property type="evidence" value="ECO:0007669"/>
    <property type="project" value="UniProtKB-UniRule"/>
</dbReference>
<dbReference type="CDD" id="cd08195">
    <property type="entry name" value="DHQS"/>
    <property type="match status" value="1"/>
</dbReference>
<dbReference type="FunFam" id="3.40.50.1970:FF:000007">
    <property type="entry name" value="Pentafunctional AROM polypeptide"/>
    <property type="match status" value="1"/>
</dbReference>
<dbReference type="Gene3D" id="3.40.50.1970">
    <property type="match status" value="1"/>
</dbReference>
<dbReference type="Gene3D" id="1.20.1090.10">
    <property type="entry name" value="Dehydroquinate synthase-like - alpha domain"/>
    <property type="match status" value="1"/>
</dbReference>
<dbReference type="HAMAP" id="MF_00110">
    <property type="entry name" value="DHQ_synthase"/>
    <property type="match status" value="1"/>
</dbReference>
<dbReference type="InterPro" id="IPR050071">
    <property type="entry name" value="Dehydroquinate_synthase"/>
</dbReference>
<dbReference type="InterPro" id="IPR016037">
    <property type="entry name" value="DHQ_synth_AroB"/>
</dbReference>
<dbReference type="InterPro" id="IPR030963">
    <property type="entry name" value="DHQ_synth_fam"/>
</dbReference>
<dbReference type="InterPro" id="IPR030960">
    <property type="entry name" value="DHQS/DOIS_N"/>
</dbReference>
<dbReference type="InterPro" id="IPR056179">
    <property type="entry name" value="DHQS_C"/>
</dbReference>
<dbReference type="NCBIfam" id="TIGR01357">
    <property type="entry name" value="aroB"/>
    <property type="match status" value="1"/>
</dbReference>
<dbReference type="PANTHER" id="PTHR43622">
    <property type="entry name" value="3-DEHYDROQUINATE SYNTHASE"/>
    <property type="match status" value="1"/>
</dbReference>
<dbReference type="PANTHER" id="PTHR43622:SF7">
    <property type="entry name" value="3-DEHYDROQUINATE SYNTHASE, CHLOROPLASTIC"/>
    <property type="match status" value="1"/>
</dbReference>
<dbReference type="Pfam" id="PF01761">
    <property type="entry name" value="DHQ_synthase"/>
    <property type="match status" value="1"/>
</dbReference>
<dbReference type="Pfam" id="PF24621">
    <property type="entry name" value="DHQS_C"/>
    <property type="match status" value="1"/>
</dbReference>
<dbReference type="PIRSF" id="PIRSF001455">
    <property type="entry name" value="DHQ_synth"/>
    <property type="match status" value="1"/>
</dbReference>
<dbReference type="SUPFAM" id="SSF56796">
    <property type="entry name" value="Dehydroquinate synthase-like"/>
    <property type="match status" value="1"/>
</dbReference>
<feature type="chain" id="PRO_0000140812" description="3-dehydroquinate synthase">
    <location>
        <begin position="1"/>
        <end position="370"/>
    </location>
</feature>
<feature type="binding site" evidence="1">
    <location>
        <begin position="112"/>
        <end position="116"/>
    </location>
    <ligand>
        <name>NAD(+)</name>
        <dbReference type="ChEBI" id="CHEBI:57540"/>
    </ligand>
</feature>
<feature type="binding site" evidence="1">
    <location>
        <begin position="136"/>
        <end position="137"/>
    </location>
    <ligand>
        <name>NAD(+)</name>
        <dbReference type="ChEBI" id="CHEBI:57540"/>
    </ligand>
</feature>
<feature type="binding site" evidence="1">
    <location>
        <position position="149"/>
    </location>
    <ligand>
        <name>NAD(+)</name>
        <dbReference type="ChEBI" id="CHEBI:57540"/>
    </ligand>
</feature>
<feature type="binding site" evidence="1">
    <location>
        <position position="158"/>
    </location>
    <ligand>
        <name>NAD(+)</name>
        <dbReference type="ChEBI" id="CHEBI:57540"/>
    </ligand>
</feature>
<feature type="binding site" evidence="1">
    <location>
        <begin position="176"/>
        <end position="179"/>
    </location>
    <ligand>
        <name>NAD(+)</name>
        <dbReference type="ChEBI" id="CHEBI:57540"/>
    </ligand>
</feature>
<feature type="binding site" evidence="1">
    <location>
        <position position="191"/>
    </location>
    <ligand>
        <name>Zn(2+)</name>
        <dbReference type="ChEBI" id="CHEBI:29105"/>
    </ligand>
</feature>
<feature type="binding site" evidence="1">
    <location>
        <position position="254"/>
    </location>
    <ligand>
        <name>Zn(2+)</name>
        <dbReference type="ChEBI" id="CHEBI:29105"/>
    </ligand>
</feature>
<feature type="binding site" evidence="1">
    <location>
        <position position="276"/>
    </location>
    <ligand>
        <name>Zn(2+)</name>
        <dbReference type="ChEBI" id="CHEBI:29105"/>
    </ligand>
</feature>
<gene>
    <name evidence="1" type="primary">aroB</name>
    <name type="ordered locus">PD_0581</name>
</gene>
<name>AROB_XYLFT</name>
<keyword id="KW-0028">Amino-acid biosynthesis</keyword>
<keyword id="KW-0057">Aromatic amino acid biosynthesis</keyword>
<keyword id="KW-0170">Cobalt</keyword>
<keyword id="KW-0963">Cytoplasm</keyword>
<keyword id="KW-0456">Lyase</keyword>
<keyword id="KW-0479">Metal-binding</keyword>
<keyword id="KW-0520">NAD</keyword>
<keyword id="KW-0547">Nucleotide-binding</keyword>
<keyword id="KW-1185">Reference proteome</keyword>
<keyword id="KW-0862">Zinc</keyword>
<reference key="1">
    <citation type="journal article" date="2003" name="J. Bacteriol.">
        <title>Comparative analyses of the complete genome sequences of Pierce's disease and citrus variegated chlorosis strains of Xylella fastidiosa.</title>
        <authorList>
            <person name="Van Sluys M.A."/>
            <person name="de Oliveira M.C."/>
            <person name="Monteiro-Vitorello C.B."/>
            <person name="Miyaki C.Y."/>
            <person name="Furlan L.R."/>
            <person name="Camargo L.E.A."/>
            <person name="da Silva A.C.R."/>
            <person name="Moon D.H."/>
            <person name="Takita M.A."/>
            <person name="Lemos E.G.M."/>
            <person name="Machado M.A."/>
            <person name="Ferro M.I.T."/>
            <person name="da Silva F.R."/>
            <person name="Goldman M.H.S."/>
            <person name="Goldman G.H."/>
            <person name="Lemos M.V.F."/>
            <person name="El-Dorry H."/>
            <person name="Tsai S.M."/>
            <person name="Carrer H."/>
            <person name="Carraro D.M."/>
            <person name="de Oliveira R.C."/>
            <person name="Nunes L.R."/>
            <person name="Siqueira W.J."/>
            <person name="Coutinho L.L."/>
            <person name="Kimura E.T."/>
            <person name="Ferro E.S."/>
            <person name="Harakava R."/>
            <person name="Kuramae E.E."/>
            <person name="Marino C.L."/>
            <person name="Giglioti E."/>
            <person name="Abreu I.L."/>
            <person name="Alves L.M.C."/>
            <person name="do Amaral A.M."/>
            <person name="Baia G.S."/>
            <person name="Blanco S.R."/>
            <person name="Brito M.S."/>
            <person name="Cannavan F.S."/>
            <person name="Celestino A.V."/>
            <person name="da Cunha A.F."/>
            <person name="Fenille R.C."/>
            <person name="Ferro J.A."/>
            <person name="Formighieri E.F."/>
            <person name="Kishi L.T."/>
            <person name="Leoni S.G."/>
            <person name="Oliveira A.R."/>
            <person name="Rosa V.E. Jr."/>
            <person name="Sassaki F.T."/>
            <person name="Sena J.A.D."/>
            <person name="de Souza A.A."/>
            <person name="Truffi D."/>
            <person name="Tsukumo F."/>
            <person name="Yanai G.M."/>
            <person name="Zaros L.G."/>
            <person name="Civerolo E.L."/>
            <person name="Simpson A.J.G."/>
            <person name="Almeida N.F. Jr."/>
            <person name="Setubal J.C."/>
            <person name="Kitajima J.P."/>
        </authorList>
    </citation>
    <scope>NUCLEOTIDE SEQUENCE [LARGE SCALE GENOMIC DNA]</scope>
    <source>
        <strain>Temecula1 / ATCC 700964</strain>
    </source>
</reference>